<name>PANB_CYAP4</name>
<sequence>MVVTIPQLQQWKRSGRAIAVLTAWDWLWASLLDQAGVDLILVGDSLAMVALGHKNTLPLSLDEMLHHTRAVCRGVQRALVVCDLPFGSYQESPQQAVRSASRVLKETPAQAVKLEGGYPAMVETVTHLVRAGIPVLGHVGLTPQSVHQYGGYPQQGKSVEAAERILSEAIALEQAGAFAIILEHIPADLGLTITQKLSIPTIGIGAGPHCDGQVLVTADALGLSERQPPFAKAYANLRETILQAVQEYCNEVQTHQFPGSG</sequence>
<feature type="chain" id="PRO_1000123378" description="3-methyl-2-oxobutanoate hydroxymethyltransferase">
    <location>
        <begin position="1"/>
        <end position="261"/>
    </location>
</feature>
<feature type="active site" description="Proton acceptor" evidence="1">
    <location>
        <position position="183"/>
    </location>
</feature>
<feature type="binding site" evidence="1">
    <location>
        <begin position="44"/>
        <end position="45"/>
    </location>
    <ligand>
        <name>3-methyl-2-oxobutanoate</name>
        <dbReference type="ChEBI" id="CHEBI:11851"/>
    </ligand>
</feature>
<feature type="binding site" evidence="1">
    <location>
        <position position="44"/>
    </location>
    <ligand>
        <name>Mg(2+)</name>
        <dbReference type="ChEBI" id="CHEBI:18420"/>
    </ligand>
</feature>
<feature type="binding site" evidence="1">
    <location>
        <position position="83"/>
    </location>
    <ligand>
        <name>3-methyl-2-oxobutanoate</name>
        <dbReference type="ChEBI" id="CHEBI:11851"/>
    </ligand>
</feature>
<feature type="binding site" evidence="1">
    <location>
        <position position="83"/>
    </location>
    <ligand>
        <name>Mg(2+)</name>
        <dbReference type="ChEBI" id="CHEBI:18420"/>
    </ligand>
</feature>
<feature type="binding site" evidence="1">
    <location>
        <position position="113"/>
    </location>
    <ligand>
        <name>3-methyl-2-oxobutanoate</name>
        <dbReference type="ChEBI" id="CHEBI:11851"/>
    </ligand>
</feature>
<feature type="binding site" evidence="1">
    <location>
        <position position="115"/>
    </location>
    <ligand>
        <name>Mg(2+)</name>
        <dbReference type="ChEBI" id="CHEBI:18420"/>
    </ligand>
</feature>
<proteinExistence type="inferred from homology"/>
<reference key="1">
    <citation type="journal article" date="2011" name="MBio">
        <title>Novel metabolic attributes of the genus Cyanothece, comprising a group of unicellular nitrogen-fixing Cyanobacteria.</title>
        <authorList>
            <person name="Bandyopadhyay A."/>
            <person name="Elvitigala T."/>
            <person name="Welsh E."/>
            <person name="Stockel J."/>
            <person name="Liberton M."/>
            <person name="Min H."/>
            <person name="Sherman L.A."/>
            <person name="Pakrasi H.B."/>
        </authorList>
    </citation>
    <scope>NUCLEOTIDE SEQUENCE [LARGE SCALE GENOMIC DNA]</scope>
    <source>
        <strain>PCC 7425 / ATCC 29141</strain>
    </source>
</reference>
<dbReference type="EC" id="2.1.2.11" evidence="1"/>
<dbReference type="EMBL" id="CP001344">
    <property type="protein sequence ID" value="ACL46475.1"/>
    <property type="molecule type" value="Genomic_DNA"/>
</dbReference>
<dbReference type="SMR" id="B8HWP9"/>
<dbReference type="STRING" id="395961.Cyan7425_4162"/>
<dbReference type="KEGG" id="cyn:Cyan7425_4162"/>
<dbReference type="eggNOG" id="COG0413">
    <property type="taxonomic scope" value="Bacteria"/>
</dbReference>
<dbReference type="HOGENOM" id="CLU_036645_1_0_3"/>
<dbReference type="OrthoDB" id="9781789at2"/>
<dbReference type="UniPathway" id="UPA00028">
    <property type="reaction ID" value="UER00003"/>
</dbReference>
<dbReference type="GO" id="GO:0005737">
    <property type="term" value="C:cytoplasm"/>
    <property type="evidence" value="ECO:0007669"/>
    <property type="project" value="UniProtKB-SubCell"/>
</dbReference>
<dbReference type="GO" id="GO:0003864">
    <property type="term" value="F:3-methyl-2-oxobutanoate hydroxymethyltransferase activity"/>
    <property type="evidence" value="ECO:0007669"/>
    <property type="project" value="UniProtKB-UniRule"/>
</dbReference>
<dbReference type="GO" id="GO:0000287">
    <property type="term" value="F:magnesium ion binding"/>
    <property type="evidence" value="ECO:0007669"/>
    <property type="project" value="TreeGrafter"/>
</dbReference>
<dbReference type="GO" id="GO:0015940">
    <property type="term" value="P:pantothenate biosynthetic process"/>
    <property type="evidence" value="ECO:0007669"/>
    <property type="project" value="UniProtKB-UniRule"/>
</dbReference>
<dbReference type="CDD" id="cd06557">
    <property type="entry name" value="KPHMT-like"/>
    <property type="match status" value="1"/>
</dbReference>
<dbReference type="FunFam" id="3.20.20.60:FF:000003">
    <property type="entry name" value="3-methyl-2-oxobutanoate hydroxymethyltransferase"/>
    <property type="match status" value="1"/>
</dbReference>
<dbReference type="Gene3D" id="3.20.20.60">
    <property type="entry name" value="Phosphoenolpyruvate-binding domains"/>
    <property type="match status" value="1"/>
</dbReference>
<dbReference type="HAMAP" id="MF_00156">
    <property type="entry name" value="PanB"/>
    <property type="match status" value="1"/>
</dbReference>
<dbReference type="InterPro" id="IPR003700">
    <property type="entry name" value="Pantoate_hydroxy_MeTrfase"/>
</dbReference>
<dbReference type="InterPro" id="IPR015813">
    <property type="entry name" value="Pyrv/PenolPyrv_kinase-like_dom"/>
</dbReference>
<dbReference type="InterPro" id="IPR040442">
    <property type="entry name" value="Pyrv_kinase-like_dom_sf"/>
</dbReference>
<dbReference type="NCBIfam" id="TIGR00222">
    <property type="entry name" value="panB"/>
    <property type="match status" value="1"/>
</dbReference>
<dbReference type="NCBIfam" id="NF001452">
    <property type="entry name" value="PRK00311.1"/>
    <property type="match status" value="1"/>
</dbReference>
<dbReference type="PANTHER" id="PTHR20881">
    <property type="entry name" value="3-METHYL-2-OXOBUTANOATE HYDROXYMETHYLTRANSFERASE"/>
    <property type="match status" value="1"/>
</dbReference>
<dbReference type="PANTHER" id="PTHR20881:SF0">
    <property type="entry name" value="3-METHYL-2-OXOBUTANOATE HYDROXYMETHYLTRANSFERASE"/>
    <property type="match status" value="1"/>
</dbReference>
<dbReference type="Pfam" id="PF02548">
    <property type="entry name" value="Pantoate_transf"/>
    <property type="match status" value="1"/>
</dbReference>
<dbReference type="PIRSF" id="PIRSF000388">
    <property type="entry name" value="Pantoate_hydroxy_MeTrfase"/>
    <property type="match status" value="1"/>
</dbReference>
<dbReference type="SUPFAM" id="SSF51621">
    <property type="entry name" value="Phosphoenolpyruvate/pyruvate domain"/>
    <property type="match status" value="1"/>
</dbReference>
<protein>
    <recommendedName>
        <fullName evidence="1">3-methyl-2-oxobutanoate hydroxymethyltransferase</fullName>
        <ecNumber evidence="1">2.1.2.11</ecNumber>
    </recommendedName>
    <alternativeName>
        <fullName evidence="1">Ketopantoate hydroxymethyltransferase</fullName>
        <shortName evidence="1">KPHMT</shortName>
    </alternativeName>
</protein>
<organism>
    <name type="scientific">Cyanothece sp. (strain PCC 7425 / ATCC 29141)</name>
    <dbReference type="NCBI Taxonomy" id="395961"/>
    <lineage>
        <taxon>Bacteria</taxon>
        <taxon>Bacillati</taxon>
        <taxon>Cyanobacteriota</taxon>
        <taxon>Cyanophyceae</taxon>
        <taxon>Gomontiellales</taxon>
        <taxon>Cyanothecaceae</taxon>
        <taxon>Cyanothece</taxon>
    </lineage>
</organism>
<evidence type="ECO:0000255" key="1">
    <source>
        <dbReference type="HAMAP-Rule" id="MF_00156"/>
    </source>
</evidence>
<comment type="function">
    <text evidence="1">Catalyzes the reversible reaction in which hydroxymethyl group from 5,10-methylenetetrahydrofolate is transferred onto alpha-ketoisovalerate to form ketopantoate.</text>
</comment>
<comment type="catalytic activity">
    <reaction evidence="1">
        <text>3-methyl-2-oxobutanoate + (6R)-5,10-methylene-5,6,7,8-tetrahydrofolate + H2O = 2-dehydropantoate + (6S)-5,6,7,8-tetrahydrofolate</text>
        <dbReference type="Rhea" id="RHEA:11824"/>
        <dbReference type="ChEBI" id="CHEBI:11561"/>
        <dbReference type="ChEBI" id="CHEBI:11851"/>
        <dbReference type="ChEBI" id="CHEBI:15377"/>
        <dbReference type="ChEBI" id="CHEBI:15636"/>
        <dbReference type="ChEBI" id="CHEBI:57453"/>
        <dbReference type="EC" id="2.1.2.11"/>
    </reaction>
</comment>
<comment type="cofactor">
    <cofactor evidence="1">
        <name>Mg(2+)</name>
        <dbReference type="ChEBI" id="CHEBI:18420"/>
    </cofactor>
    <text evidence="1">Binds 1 Mg(2+) ion per subunit.</text>
</comment>
<comment type="pathway">
    <text evidence="1">Cofactor biosynthesis; (R)-pantothenate biosynthesis; (R)-pantoate from 3-methyl-2-oxobutanoate: step 1/2.</text>
</comment>
<comment type="subunit">
    <text evidence="1">Homodecamer; pentamer of dimers.</text>
</comment>
<comment type="subcellular location">
    <subcellularLocation>
        <location evidence="1">Cytoplasm</location>
    </subcellularLocation>
</comment>
<comment type="similarity">
    <text evidence="1">Belongs to the PanB family.</text>
</comment>
<gene>
    <name evidence="1" type="primary">panB</name>
    <name type="ordered locus">Cyan7425_4162</name>
</gene>
<accession>B8HWP9</accession>
<keyword id="KW-0963">Cytoplasm</keyword>
<keyword id="KW-0460">Magnesium</keyword>
<keyword id="KW-0479">Metal-binding</keyword>
<keyword id="KW-0566">Pantothenate biosynthesis</keyword>
<keyword id="KW-0808">Transferase</keyword>